<gene>
    <name evidence="1" type="primary">ndk</name>
    <name type="ordered locus">VFMJ11_0639</name>
</gene>
<keyword id="KW-0067">ATP-binding</keyword>
<keyword id="KW-0963">Cytoplasm</keyword>
<keyword id="KW-0418">Kinase</keyword>
<keyword id="KW-0460">Magnesium</keyword>
<keyword id="KW-0479">Metal-binding</keyword>
<keyword id="KW-0546">Nucleotide metabolism</keyword>
<keyword id="KW-0547">Nucleotide-binding</keyword>
<keyword id="KW-0597">Phosphoprotein</keyword>
<keyword id="KW-0808">Transferase</keyword>
<organism>
    <name type="scientific">Aliivibrio fischeri (strain MJ11)</name>
    <name type="common">Vibrio fischeri</name>
    <dbReference type="NCBI Taxonomy" id="388396"/>
    <lineage>
        <taxon>Bacteria</taxon>
        <taxon>Pseudomonadati</taxon>
        <taxon>Pseudomonadota</taxon>
        <taxon>Gammaproteobacteria</taxon>
        <taxon>Vibrionales</taxon>
        <taxon>Vibrionaceae</taxon>
        <taxon>Aliivibrio</taxon>
    </lineage>
</organism>
<name>NDK_ALIFM</name>
<proteinExistence type="inferred from homology"/>
<reference key="1">
    <citation type="submission" date="2008-08" db="EMBL/GenBank/DDBJ databases">
        <title>Complete sequence of Vibrio fischeri strain MJ11.</title>
        <authorList>
            <person name="Mandel M.J."/>
            <person name="Stabb E.V."/>
            <person name="Ruby E.G."/>
            <person name="Ferriera S."/>
            <person name="Johnson J."/>
            <person name="Kravitz S."/>
            <person name="Beeson K."/>
            <person name="Sutton G."/>
            <person name="Rogers Y.-H."/>
            <person name="Friedman R."/>
            <person name="Frazier M."/>
            <person name="Venter J.C."/>
        </authorList>
    </citation>
    <scope>NUCLEOTIDE SEQUENCE [LARGE SCALE GENOMIC DNA]</scope>
    <source>
        <strain>MJ11</strain>
    </source>
</reference>
<accession>B5FAW8</accession>
<evidence type="ECO:0000255" key="1">
    <source>
        <dbReference type="HAMAP-Rule" id="MF_00451"/>
    </source>
</evidence>
<sequence length="144" mass="16250">MTIERTFSIVKPDAVKRNLIGAIYRRIEKTGMQIVAAKMLRLTKEQAEGFYAEHEGKEFFDELVAYMMSGPVMVQVLEGENAVVRYRELMGKTNPEEAACGSLRADYAISMRYNSVHGADSPESAAREIAYFFAEDEICPRPVE</sequence>
<comment type="function">
    <text evidence="1">Major role in the synthesis of nucleoside triphosphates other than ATP. The ATP gamma phosphate is transferred to the NDP beta phosphate via a ping-pong mechanism, using a phosphorylated active-site intermediate.</text>
</comment>
<comment type="catalytic activity">
    <reaction evidence="1">
        <text>a 2'-deoxyribonucleoside 5'-diphosphate + ATP = a 2'-deoxyribonucleoside 5'-triphosphate + ADP</text>
        <dbReference type="Rhea" id="RHEA:44640"/>
        <dbReference type="ChEBI" id="CHEBI:30616"/>
        <dbReference type="ChEBI" id="CHEBI:61560"/>
        <dbReference type="ChEBI" id="CHEBI:73316"/>
        <dbReference type="ChEBI" id="CHEBI:456216"/>
        <dbReference type="EC" id="2.7.4.6"/>
    </reaction>
</comment>
<comment type="catalytic activity">
    <reaction evidence="1">
        <text>a ribonucleoside 5'-diphosphate + ATP = a ribonucleoside 5'-triphosphate + ADP</text>
        <dbReference type="Rhea" id="RHEA:18113"/>
        <dbReference type="ChEBI" id="CHEBI:30616"/>
        <dbReference type="ChEBI" id="CHEBI:57930"/>
        <dbReference type="ChEBI" id="CHEBI:61557"/>
        <dbReference type="ChEBI" id="CHEBI:456216"/>
        <dbReference type="EC" id="2.7.4.6"/>
    </reaction>
</comment>
<comment type="cofactor">
    <cofactor evidence="1">
        <name>Mg(2+)</name>
        <dbReference type="ChEBI" id="CHEBI:18420"/>
    </cofactor>
</comment>
<comment type="subunit">
    <text evidence="1">Homotetramer.</text>
</comment>
<comment type="subcellular location">
    <subcellularLocation>
        <location evidence="1">Cytoplasm</location>
    </subcellularLocation>
</comment>
<comment type="similarity">
    <text evidence="1">Belongs to the NDK family.</text>
</comment>
<dbReference type="EC" id="2.7.4.6" evidence="1"/>
<dbReference type="EMBL" id="CP001139">
    <property type="protein sequence ID" value="ACH67127.1"/>
    <property type="molecule type" value="Genomic_DNA"/>
</dbReference>
<dbReference type="RefSeq" id="WP_012534215.1">
    <property type="nucleotide sequence ID" value="NC_011184.1"/>
</dbReference>
<dbReference type="SMR" id="B5FAW8"/>
<dbReference type="KEGG" id="vfm:VFMJ11_0639"/>
<dbReference type="HOGENOM" id="CLU_060216_8_1_6"/>
<dbReference type="Proteomes" id="UP000001857">
    <property type="component" value="Chromosome I"/>
</dbReference>
<dbReference type="GO" id="GO:0005737">
    <property type="term" value="C:cytoplasm"/>
    <property type="evidence" value="ECO:0007669"/>
    <property type="project" value="UniProtKB-SubCell"/>
</dbReference>
<dbReference type="GO" id="GO:0005524">
    <property type="term" value="F:ATP binding"/>
    <property type="evidence" value="ECO:0007669"/>
    <property type="project" value="UniProtKB-UniRule"/>
</dbReference>
<dbReference type="GO" id="GO:0046872">
    <property type="term" value="F:metal ion binding"/>
    <property type="evidence" value="ECO:0007669"/>
    <property type="project" value="UniProtKB-KW"/>
</dbReference>
<dbReference type="GO" id="GO:0004550">
    <property type="term" value="F:nucleoside diphosphate kinase activity"/>
    <property type="evidence" value="ECO:0007669"/>
    <property type="project" value="UniProtKB-UniRule"/>
</dbReference>
<dbReference type="GO" id="GO:0006241">
    <property type="term" value="P:CTP biosynthetic process"/>
    <property type="evidence" value="ECO:0007669"/>
    <property type="project" value="UniProtKB-UniRule"/>
</dbReference>
<dbReference type="GO" id="GO:0006183">
    <property type="term" value="P:GTP biosynthetic process"/>
    <property type="evidence" value="ECO:0007669"/>
    <property type="project" value="UniProtKB-UniRule"/>
</dbReference>
<dbReference type="GO" id="GO:0006228">
    <property type="term" value="P:UTP biosynthetic process"/>
    <property type="evidence" value="ECO:0007669"/>
    <property type="project" value="UniProtKB-UniRule"/>
</dbReference>
<dbReference type="CDD" id="cd04413">
    <property type="entry name" value="NDPk_I"/>
    <property type="match status" value="1"/>
</dbReference>
<dbReference type="FunFam" id="3.30.70.141:FF:000001">
    <property type="entry name" value="Nucleoside diphosphate kinase"/>
    <property type="match status" value="1"/>
</dbReference>
<dbReference type="Gene3D" id="3.30.70.141">
    <property type="entry name" value="Nucleoside diphosphate kinase-like domain"/>
    <property type="match status" value="1"/>
</dbReference>
<dbReference type="HAMAP" id="MF_00451">
    <property type="entry name" value="NDP_kinase"/>
    <property type="match status" value="1"/>
</dbReference>
<dbReference type="InterPro" id="IPR034907">
    <property type="entry name" value="NDK-like_dom"/>
</dbReference>
<dbReference type="InterPro" id="IPR036850">
    <property type="entry name" value="NDK-like_dom_sf"/>
</dbReference>
<dbReference type="InterPro" id="IPR001564">
    <property type="entry name" value="Nucleoside_diP_kinase"/>
</dbReference>
<dbReference type="NCBIfam" id="NF001908">
    <property type="entry name" value="PRK00668.1"/>
    <property type="match status" value="1"/>
</dbReference>
<dbReference type="PANTHER" id="PTHR46161">
    <property type="entry name" value="NUCLEOSIDE DIPHOSPHATE KINASE"/>
    <property type="match status" value="1"/>
</dbReference>
<dbReference type="PANTHER" id="PTHR46161:SF3">
    <property type="entry name" value="NUCLEOSIDE DIPHOSPHATE KINASE DDB_G0292928-RELATED"/>
    <property type="match status" value="1"/>
</dbReference>
<dbReference type="Pfam" id="PF00334">
    <property type="entry name" value="NDK"/>
    <property type="match status" value="1"/>
</dbReference>
<dbReference type="PRINTS" id="PR01243">
    <property type="entry name" value="NUCDPKINASE"/>
</dbReference>
<dbReference type="SMART" id="SM00562">
    <property type="entry name" value="NDK"/>
    <property type="match status" value="1"/>
</dbReference>
<dbReference type="SUPFAM" id="SSF54919">
    <property type="entry name" value="Nucleoside diphosphate kinase, NDK"/>
    <property type="match status" value="1"/>
</dbReference>
<dbReference type="PROSITE" id="PS51374">
    <property type="entry name" value="NDPK_LIKE"/>
    <property type="match status" value="1"/>
</dbReference>
<feature type="chain" id="PRO_1000125028" description="Nucleoside diphosphate kinase">
    <location>
        <begin position="1"/>
        <end position="144"/>
    </location>
</feature>
<feature type="active site" description="Pros-phosphohistidine intermediate" evidence="1">
    <location>
        <position position="117"/>
    </location>
</feature>
<feature type="binding site" evidence="1">
    <location>
        <position position="11"/>
    </location>
    <ligand>
        <name>ATP</name>
        <dbReference type="ChEBI" id="CHEBI:30616"/>
    </ligand>
</feature>
<feature type="binding site" evidence="1">
    <location>
        <position position="59"/>
    </location>
    <ligand>
        <name>ATP</name>
        <dbReference type="ChEBI" id="CHEBI:30616"/>
    </ligand>
</feature>
<feature type="binding site" evidence="1">
    <location>
        <position position="87"/>
    </location>
    <ligand>
        <name>ATP</name>
        <dbReference type="ChEBI" id="CHEBI:30616"/>
    </ligand>
</feature>
<feature type="binding site" evidence="1">
    <location>
        <position position="93"/>
    </location>
    <ligand>
        <name>ATP</name>
        <dbReference type="ChEBI" id="CHEBI:30616"/>
    </ligand>
</feature>
<feature type="binding site" evidence="1">
    <location>
        <position position="104"/>
    </location>
    <ligand>
        <name>ATP</name>
        <dbReference type="ChEBI" id="CHEBI:30616"/>
    </ligand>
</feature>
<feature type="binding site" evidence="1">
    <location>
        <position position="114"/>
    </location>
    <ligand>
        <name>ATP</name>
        <dbReference type="ChEBI" id="CHEBI:30616"/>
    </ligand>
</feature>
<protein>
    <recommendedName>
        <fullName evidence="1">Nucleoside diphosphate kinase</fullName>
        <shortName evidence="1">NDK</shortName>
        <shortName evidence="1">NDP kinase</shortName>
        <ecNumber evidence="1">2.7.4.6</ecNumber>
    </recommendedName>
    <alternativeName>
        <fullName evidence="1">Nucleoside-2-P kinase</fullName>
    </alternativeName>
</protein>